<sequence>MAKIIGIDLGTTNSCVAVLEGDKVKVIENAEGTRTTPSIVAYKDSEILVGQSAKRQAVTNPKNTLFAIKRLIGRRYEDQAVQKDIGLVPYKIIKADNGDAWVEVNDKKLAPQQVSAEILKKMKKTAEDYLGETVTEAVITVPAYFNDAQRQATKDAGRIAGLDVKRIINEPTAAALAFGMDKKEGDRKVAVYDLGGGTFDVSIIEIADLDGDQQIEVLSTNGDTFLGGEDFDTALIDYLVEEFKKEQSVNLKNDPLALQRLKEAAEKAKIELSSSSSTEINLPYITADATGPKHLVINVTRAKLEGLVADLVARTIEPCRIALKDAGLSTSDISDVILVGGQSRMPMVQQKVQEFFGKEPRKDVNPDEAVAIGAAIQGAVLSGDKTDVLLLDVTPLTLGIETMGGVLTPIIEKNTTIPAKKSQVFSTAADNQPAVDISVYQGERKMAQQNKLLGNFQLGDIPPAPRGVPQIEVSFDINADGILKVSAKDKSTGKEQSIQIKANSGLSDAEIEAMIKDAEANAEEDRKFEELAKARNEADALVSSSNKAVKDLGDKVTEDEKTAITTAVSELEAATKENDVEDIKAKTEALQNILMPITQRAYEQAQGAGGAQGFDPNAFQGGDAGQQQKADDGVVDAEFTEVKDDKK</sequence>
<organism>
    <name type="scientific">Acinetobacter baylyi (strain ATCC 33305 / BD413 / ADP1)</name>
    <dbReference type="NCBI Taxonomy" id="62977"/>
    <lineage>
        <taxon>Bacteria</taxon>
        <taxon>Pseudomonadati</taxon>
        <taxon>Pseudomonadota</taxon>
        <taxon>Gammaproteobacteria</taxon>
        <taxon>Moraxellales</taxon>
        <taxon>Moraxellaceae</taxon>
        <taxon>Acinetobacter</taxon>
    </lineage>
</organism>
<keyword id="KW-0067">ATP-binding</keyword>
<keyword id="KW-0143">Chaperone</keyword>
<keyword id="KW-0547">Nucleotide-binding</keyword>
<keyword id="KW-0597">Phosphoprotein</keyword>
<keyword id="KW-0346">Stress response</keyword>
<evidence type="ECO:0000255" key="1">
    <source>
        <dbReference type="HAMAP-Rule" id="MF_00332"/>
    </source>
</evidence>
<evidence type="ECO:0000256" key="2">
    <source>
        <dbReference type="SAM" id="MobiDB-lite"/>
    </source>
</evidence>
<dbReference type="EMBL" id="CR543861">
    <property type="protein sequence ID" value="CAG70284.1"/>
    <property type="molecule type" value="Genomic_DNA"/>
</dbReference>
<dbReference type="RefSeq" id="WP_004930151.1">
    <property type="nucleotide sequence ID" value="NC_005966.1"/>
</dbReference>
<dbReference type="SMR" id="Q6F6N3"/>
<dbReference type="STRING" id="202950.GCA_001485005_03203"/>
<dbReference type="GeneID" id="45235816"/>
<dbReference type="KEGG" id="aci:ACIAD3654"/>
<dbReference type="eggNOG" id="COG0443">
    <property type="taxonomic scope" value="Bacteria"/>
</dbReference>
<dbReference type="HOGENOM" id="CLU_005965_2_1_6"/>
<dbReference type="OrthoDB" id="9766019at2"/>
<dbReference type="BioCyc" id="ASP62977:ACIAD_RS16530-MONOMER"/>
<dbReference type="Proteomes" id="UP000000430">
    <property type="component" value="Chromosome"/>
</dbReference>
<dbReference type="GO" id="GO:0005524">
    <property type="term" value="F:ATP binding"/>
    <property type="evidence" value="ECO:0007669"/>
    <property type="project" value="UniProtKB-UniRule"/>
</dbReference>
<dbReference type="GO" id="GO:0140662">
    <property type="term" value="F:ATP-dependent protein folding chaperone"/>
    <property type="evidence" value="ECO:0007669"/>
    <property type="project" value="InterPro"/>
</dbReference>
<dbReference type="GO" id="GO:0051082">
    <property type="term" value="F:unfolded protein binding"/>
    <property type="evidence" value="ECO:0007669"/>
    <property type="project" value="InterPro"/>
</dbReference>
<dbReference type="CDD" id="cd10234">
    <property type="entry name" value="ASKHA_NBD_HSP70_DnaK-like"/>
    <property type="match status" value="1"/>
</dbReference>
<dbReference type="FunFam" id="2.60.34.10:FF:000014">
    <property type="entry name" value="Chaperone protein DnaK HSP70"/>
    <property type="match status" value="1"/>
</dbReference>
<dbReference type="FunFam" id="3.30.30.30:FF:000003">
    <property type="entry name" value="Heat shock protein 9"/>
    <property type="match status" value="1"/>
</dbReference>
<dbReference type="FunFam" id="1.20.1270.10:FF:000001">
    <property type="entry name" value="Molecular chaperone DnaK"/>
    <property type="match status" value="1"/>
</dbReference>
<dbReference type="FunFam" id="3.30.420.40:FF:000004">
    <property type="entry name" value="Molecular chaperone DnaK"/>
    <property type="match status" value="1"/>
</dbReference>
<dbReference type="FunFam" id="3.90.640.10:FF:000003">
    <property type="entry name" value="Molecular chaperone DnaK"/>
    <property type="match status" value="1"/>
</dbReference>
<dbReference type="Gene3D" id="1.20.1270.10">
    <property type="match status" value="1"/>
</dbReference>
<dbReference type="Gene3D" id="3.30.420.40">
    <property type="match status" value="2"/>
</dbReference>
<dbReference type="Gene3D" id="3.90.640.10">
    <property type="entry name" value="Actin, Chain A, domain 4"/>
    <property type="match status" value="1"/>
</dbReference>
<dbReference type="Gene3D" id="2.60.34.10">
    <property type="entry name" value="Substrate Binding Domain Of DNAk, Chain A, domain 1"/>
    <property type="match status" value="1"/>
</dbReference>
<dbReference type="HAMAP" id="MF_00332">
    <property type="entry name" value="DnaK"/>
    <property type="match status" value="1"/>
</dbReference>
<dbReference type="InterPro" id="IPR043129">
    <property type="entry name" value="ATPase_NBD"/>
</dbReference>
<dbReference type="InterPro" id="IPR012725">
    <property type="entry name" value="Chaperone_DnaK"/>
</dbReference>
<dbReference type="InterPro" id="IPR018181">
    <property type="entry name" value="Heat_shock_70_CS"/>
</dbReference>
<dbReference type="InterPro" id="IPR029048">
    <property type="entry name" value="HSP70_C_sf"/>
</dbReference>
<dbReference type="InterPro" id="IPR029047">
    <property type="entry name" value="HSP70_peptide-bd_sf"/>
</dbReference>
<dbReference type="InterPro" id="IPR013126">
    <property type="entry name" value="Hsp_70_fam"/>
</dbReference>
<dbReference type="NCBIfam" id="NF001413">
    <property type="entry name" value="PRK00290.1"/>
    <property type="match status" value="1"/>
</dbReference>
<dbReference type="NCBIfam" id="TIGR02350">
    <property type="entry name" value="prok_dnaK"/>
    <property type="match status" value="1"/>
</dbReference>
<dbReference type="PANTHER" id="PTHR19375">
    <property type="entry name" value="HEAT SHOCK PROTEIN 70KDA"/>
    <property type="match status" value="1"/>
</dbReference>
<dbReference type="Pfam" id="PF00012">
    <property type="entry name" value="HSP70"/>
    <property type="match status" value="1"/>
</dbReference>
<dbReference type="PRINTS" id="PR00301">
    <property type="entry name" value="HEATSHOCK70"/>
</dbReference>
<dbReference type="SUPFAM" id="SSF53067">
    <property type="entry name" value="Actin-like ATPase domain"/>
    <property type="match status" value="2"/>
</dbReference>
<dbReference type="SUPFAM" id="SSF100934">
    <property type="entry name" value="Heat shock protein 70kD (HSP70), C-terminal subdomain"/>
    <property type="match status" value="1"/>
</dbReference>
<dbReference type="SUPFAM" id="SSF100920">
    <property type="entry name" value="Heat shock protein 70kD (HSP70), peptide-binding domain"/>
    <property type="match status" value="1"/>
</dbReference>
<dbReference type="PROSITE" id="PS00297">
    <property type="entry name" value="HSP70_1"/>
    <property type="match status" value="1"/>
</dbReference>
<dbReference type="PROSITE" id="PS00329">
    <property type="entry name" value="HSP70_2"/>
    <property type="match status" value="1"/>
</dbReference>
<dbReference type="PROSITE" id="PS01036">
    <property type="entry name" value="HSP70_3"/>
    <property type="match status" value="1"/>
</dbReference>
<name>DNAK_ACIAD</name>
<proteinExistence type="inferred from homology"/>
<reference key="1">
    <citation type="journal article" date="2004" name="Nucleic Acids Res.">
        <title>Unique features revealed by the genome sequence of Acinetobacter sp. ADP1, a versatile and naturally transformation competent bacterium.</title>
        <authorList>
            <person name="Barbe V."/>
            <person name="Vallenet D."/>
            <person name="Fonknechten N."/>
            <person name="Kreimeyer A."/>
            <person name="Oztas S."/>
            <person name="Labarre L."/>
            <person name="Cruveiller S."/>
            <person name="Robert C."/>
            <person name="Duprat S."/>
            <person name="Wincker P."/>
            <person name="Ornston L.N."/>
            <person name="Weissenbach J."/>
            <person name="Marliere P."/>
            <person name="Cohen G.N."/>
            <person name="Medigue C."/>
        </authorList>
    </citation>
    <scope>NUCLEOTIDE SEQUENCE [LARGE SCALE GENOMIC DNA]</scope>
    <source>
        <strain>ATCC 33305 / BD413 / ADP1</strain>
    </source>
</reference>
<accession>Q6F6N3</accession>
<gene>
    <name evidence="1" type="primary">dnaK</name>
    <name type="ordered locus">ACIAD3654</name>
</gene>
<feature type="chain" id="PRO_0000225928" description="Chaperone protein DnaK">
    <location>
        <begin position="1"/>
        <end position="647"/>
    </location>
</feature>
<feature type="region of interest" description="Disordered" evidence="2">
    <location>
        <begin position="603"/>
        <end position="647"/>
    </location>
</feature>
<feature type="compositionally biased region" description="Low complexity" evidence="2">
    <location>
        <begin position="618"/>
        <end position="628"/>
    </location>
</feature>
<feature type="modified residue" description="Phosphothreonine; by autocatalysis" evidence="1">
    <location>
        <position position="198"/>
    </location>
</feature>
<protein>
    <recommendedName>
        <fullName evidence="1">Chaperone protein DnaK</fullName>
    </recommendedName>
    <alternativeName>
        <fullName evidence="1">HSP70</fullName>
    </alternativeName>
    <alternativeName>
        <fullName evidence="1">Heat shock 70 kDa protein</fullName>
    </alternativeName>
    <alternativeName>
        <fullName evidence="1">Heat shock protein 70</fullName>
    </alternativeName>
</protein>
<comment type="function">
    <text evidence="1">Acts as a chaperone.</text>
</comment>
<comment type="induction">
    <text evidence="1">By stress conditions e.g. heat shock.</text>
</comment>
<comment type="similarity">
    <text evidence="1">Belongs to the heat shock protein 70 family.</text>
</comment>